<protein>
    <recommendedName>
        <fullName>Globin CTT-VIIB-4</fullName>
    </recommendedName>
</protein>
<feature type="signal peptide" evidence="1">
    <location>
        <begin position="1"/>
        <end position="16"/>
    </location>
</feature>
<feature type="chain" id="PRO_0000011196" description="Globin CTT-VIIB-4">
    <location>
        <begin position="17"/>
        <end position="161"/>
    </location>
</feature>
<feature type="domain" description="Globin" evidence="2">
    <location>
        <begin position="18"/>
        <end position="161"/>
    </location>
</feature>
<feature type="binding site" description="distal binding residue" evidence="2">
    <location>
        <position position="76"/>
    </location>
    <ligand>
        <name>heme b</name>
        <dbReference type="ChEBI" id="CHEBI:60344"/>
    </ligand>
    <ligandPart>
        <name>Fe</name>
        <dbReference type="ChEBI" id="CHEBI:18248"/>
    </ligandPart>
</feature>
<feature type="binding site" description="proximal binding residue" evidence="2">
    <location>
        <position position="111"/>
    </location>
    <ligand>
        <name>heme b</name>
        <dbReference type="ChEBI" id="CHEBI:60344"/>
    </ligand>
    <ligandPart>
        <name>Fe</name>
        <dbReference type="ChEBI" id="CHEBI:18248"/>
    </ligandPart>
</feature>
<evidence type="ECO:0000250" key="1"/>
<evidence type="ECO:0000255" key="2">
    <source>
        <dbReference type="PROSITE-ProRule" id="PRU00238"/>
    </source>
</evidence>
<name>GLB74_CHITP</name>
<reference key="1">
    <citation type="journal article" date="1989" name="Biol. Chem. Hoppe-Seyler">
        <title>Structure of a hemoglobin gene cluster and nucleotide sequence of three hemoglobin genes from the midge Chironomus thummi piger (Diptera, Insecta).</title>
        <authorList>
            <person name="Rozynek P."/>
            <person name="Hankeln T."/>
            <person name="Schmidt E.R."/>
        </authorList>
    </citation>
    <scope>NUCLEOTIDE SEQUENCE [GENOMIC DNA]</scope>
</reference>
<reference key="2">
    <citation type="submission" date="1990-09" db="EMBL/GenBank/DDBJ databases">
        <authorList>
            <person name="Hankeln T."/>
            <person name="Rozynek P."/>
            <person name="Schmidt E.R."/>
            <person name="Broecker M."/>
        </authorList>
    </citation>
    <scope>NUCLEOTIDE SEQUENCE [GENOMIC DNA]</scope>
</reference>
<accession>P84297</accession>
<accession>P02225</accession>
<accession>P12292</accession>
<sequence length="161" mass="16804">MKFFAVLALCIVGAIASPLTADEASLVQSSWKAVSHNEVDILAAVFAAYPDIQAKFPQFAGKDLASIKDTGAFATHATRIVSFLSEVIALSGNASNAAAVEGLLNKLGSDHKARGVSAAQFGEFRTALVSYLSNHVSWGDNVAAAWNKALDNTMAVAVAHL</sequence>
<comment type="subunit">
    <text>Homodimer.</text>
</comment>
<comment type="miscellaneous">
    <text>There are at least 12 different components in Midge globin.</text>
</comment>
<comment type="miscellaneous">
    <text>There are at least nine genes for VIIB variants.</text>
</comment>
<comment type="similarity">
    <text evidence="2">Belongs to the globin family.</text>
</comment>
<organism>
    <name type="scientific">Chironomus thummi piger</name>
    <name type="common">Midge</name>
    <name type="synonym">Chironomus piger</name>
    <dbReference type="NCBI Taxonomy" id="7156"/>
    <lineage>
        <taxon>Eukaryota</taxon>
        <taxon>Metazoa</taxon>
        <taxon>Ecdysozoa</taxon>
        <taxon>Arthropoda</taxon>
        <taxon>Hexapoda</taxon>
        <taxon>Insecta</taxon>
        <taxon>Pterygota</taxon>
        <taxon>Neoptera</taxon>
        <taxon>Endopterygota</taxon>
        <taxon>Diptera</taxon>
        <taxon>Nematocera</taxon>
        <taxon>Chironomoidea</taxon>
        <taxon>Chironomidae</taxon>
        <taxon>Chironominae</taxon>
        <taxon>Chironomus</taxon>
    </lineage>
</organism>
<gene>
    <name type="primary">CTT-7B4</name>
    <name type="synonym">HbVIIB-9</name>
</gene>
<keyword id="KW-0349">Heme</keyword>
<keyword id="KW-0408">Iron</keyword>
<keyword id="KW-0479">Metal-binding</keyword>
<keyword id="KW-0561">Oxygen transport</keyword>
<keyword id="KW-0732">Signal</keyword>
<keyword id="KW-0813">Transport</keyword>
<proteinExistence type="inferred from homology"/>
<dbReference type="EMBL" id="X56271">
    <property type="protein sequence ID" value="CAA39712.1"/>
    <property type="molecule type" value="Genomic_DNA"/>
</dbReference>
<dbReference type="PIR" id="S04500">
    <property type="entry name" value="S04500"/>
</dbReference>
<dbReference type="SMR" id="P84297"/>
<dbReference type="GO" id="GO:0005576">
    <property type="term" value="C:extracellular region"/>
    <property type="evidence" value="ECO:0007669"/>
    <property type="project" value="InterPro"/>
</dbReference>
<dbReference type="GO" id="GO:0005833">
    <property type="term" value="C:hemoglobin complex"/>
    <property type="evidence" value="ECO:0007669"/>
    <property type="project" value="InterPro"/>
</dbReference>
<dbReference type="GO" id="GO:0020037">
    <property type="term" value="F:heme binding"/>
    <property type="evidence" value="ECO:0007669"/>
    <property type="project" value="InterPro"/>
</dbReference>
<dbReference type="GO" id="GO:0046872">
    <property type="term" value="F:metal ion binding"/>
    <property type="evidence" value="ECO:0007669"/>
    <property type="project" value="UniProtKB-KW"/>
</dbReference>
<dbReference type="GO" id="GO:0019825">
    <property type="term" value="F:oxygen binding"/>
    <property type="evidence" value="ECO:0007669"/>
    <property type="project" value="InterPro"/>
</dbReference>
<dbReference type="GO" id="GO:0005344">
    <property type="term" value="F:oxygen carrier activity"/>
    <property type="evidence" value="ECO:0007669"/>
    <property type="project" value="UniProtKB-KW"/>
</dbReference>
<dbReference type="CDD" id="cd01040">
    <property type="entry name" value="Mb-like"/>
    <property type="match status" value="1"/>
</dbReference>
<dbReference type="Gene3D" id="1.10.490.10">
    <property type="entry name" value="Globins"/>
    <property type="match status" value="1"/>
</dbReference>
<dbReference type="InterPro" id="IPR002336">
    <property type="entry name" value="Erythrocruorin"/>
</dbReference>
<dbReference type="InterPro" id="IPR000971">
    <property type="entry name" value="Globin"/>
</dbReference>
<dbReference type="InterPro" id="IPR009050">
    <property type="entry name" value="Globin-like_sf"/>
</dbReference>
<dbReference type="InterPro" id="IPR012292">
    <property type="entry name" value="Globin/Proto"/>
</dbReference>
<dbReference type="InterPro" id="IPR044399">
    <property type="entry name" value="Mb-like_M"/>
</dbReference>
<dbReference type="PANTHER" id="PTHR47217">
    <property type="entry name" value="GLOBIN-LIKE PROTEIN"/>
    <property type="match status" value="1"/>
</dbReference>
<dbReference type="PANTHER" id="PTHR47217:SF1">
    <property type="entry name" value="GLOBIN-LIKE PROTEIN"/>
    <property type="match status" value="1"/>
</dbReference>
<dbReference type="Pfam" id="PF00042">
    <property type="entry name" value="Globin"/>
    <property type="match status" value="1"/>
</dbReference>
<dbReference type="PRINTS" id="PR00611">
    <property type="entry name" value="ERYTHCRUORIN"/>
</dbReference>
<dbReference type="SUPFAM" id="SSF46458">
    <property type="entry name" value="Globin-like"/>
    <property type="match status" value="1"/>
</dbReference>
<dbReference type="PROSITE" id="PS01033">
    <property type="entry name" value="GLOBIN"/>
    <property type="match status" value="1"/>
</dbReference>